<sequence>MRAECSAFRYFLKGDGDLVLSVYIRVLCVFLEPVQRGSCSL</sequence>
<keyword id="KW-1185">Reference proteome</keyword>
<name>Y332_TREPA</name>
<gene>
    <name type="ordered locus">TP_0332</name>
</gene>
<reference key="1">
    <citation type="journal article" date="1998" name="Science">
        <title>Complete genome sequence of Treponema pallidum, the syphilis spirochete.</title>
        <authorList>
            <person name="Fraser C.M."/>
            <person name="Norris S.J."/>
            <person name="Weinstock G.M."/>
            <person name="White O."/>
            <person name="Sutton G.G."/>
            <person name="Dodson R.J."/>
            <person name="Gwinn M.L."/>
            <person name="Hickey E.K."/>
            <person name="Clayton R.A."/>
            <person name="Ketchum K.A."/>
            <person name="Sodergren E."/>
            <person name="Hardham J.M."/>
            <person name="McLeod M.P."/>
            <person name="Salzberg S.L."/>
            <person name="Peterson J.D."/>
            <person name="Khalak H.G."/>
            <person name="Richardson D.L."/>
            <person name="Howell J.K."/>
            <person name="Chidambaram M."/>
            <person name="Utterback T.R."/>
            <person name="McDonald L.A."/>
            <person name="Artiach P."/>
            <person name="Bowman C."/>
            <person name="Cotton M.D."/>
            <person name="Fujii C."/>
            <person name="Garland S.A."/>
            <person name="Hatch B."/>
            <person name="Horst K."/>
            <person name="Roberts K.M."/>
            <person name="Sandusky M."/>
            <person name="Weidman J.F."/>
            <person name="Smith H.O."/>
            <person name="Venter J.C."/>
        </authorList>
    </citation>
    <scope>NUCLEOTIDE SEQUENCE [LARGE SCALE GENOMIC DNA]</scope>
    <source>
        <strain>Nichols</strain>
    </source>
</reference>
<feature type="chain" id="PRO_0000202237" description="Uncharacterized protein TP_0332">
    <location>
        <begin position="1"/>
        <end position="41"/>
    </location>
</feature>
<dbReference type="EMBL" id="AE000520">
    <property type="protein sequence ID" value="AAC65327.1"/>
    <property type="molecule type" value="Genomic_DNA"/>
</dbReference>
<dbReference type="PIR" id="B71337">
    <property type="entry name" value="B71337"/>
</dbReference>
<dbReference type="IntAct" id="O83352">
    <property type="interactions" value="1"/>
</dbReference>
<dbReference type="STRING" id="243276.TP_0332"/>
<dbReference type="EnsemblBacteria" id="AAC65327">
    <property type="protein sequence ID" value="AAC65327"/>
    <property type="gene ID" value="TP_0332"/>
</dbReference>
<dbReference type="KEGG" id="tpa:TP_0332"/>
<dbReference type="HOGENOM" id="CLU_3278191_0_0_12"/>
<dbReference type="Proteomes" id="UP000000811">
    <property type="component" value="Chromosome"/>
</dbReference>
<accession>O83352</accession>
<protein>
    <recommendedName>
        <fullName>Uncharacterized protein TP_0332</fullName>
    </recommendedName>
</protein>
<proteinExistence type="predicted"/>
<organism>
    <name type="scientific">Treponema pallidum (strain Nichols)</name>
    <dbReference type="NCBI Taxonomy" id="243276"/>
    <lineage>
        <taxon>Bacteria</taxon>
        <taxon>Pseudomonadati</taxon>
        <taxon>Spirochaetota</taxon>
        <taxon>Spirochaetia</taxon>
        <taxon>Spirochaetales</taxon>
        <taxon>Treponemataceae</taxon>
        <taxon>Treponema</taxon>
    </lineage>
</organism>